<reference key="1">
    <citation type="book" date="2006" name="Gram positive pathogens, 2nd edition">
        <title>The Staphylococcus aureus NCTC 8325 genome.</title>
        <editorList>
            <person name="Fischetti V."/>
            <person name="Novick R."/>
            <person name="Ferretti J."/>
            <person name="Portnoy D."/>
            <person name="Rood J."/>
        </editorList>
        <authorList>
            <person name="Gillaspy A.F."/>
            <person name="Worrell V."/>
            <person name="Orvis J."/>
            <person name="Roe B.A."/>
            <person name="Dyer D.W."/>
            <person name="Iandolo J.J."/>
        </authorList>
    </citation>
    <scope>NUCLEOTIDE SEQUENCE [LARGE SCALE GENOMIC DNA]</scope>
    <source>
        <strain>NCTC 8325 / PS 47</strain>
    </source>
</reference>
<sequence>MMIIVMLLLSYLIGAFPSGFVIGKLFFKKDIRQFGSGNTGATNSFRVLGRPAGFLVTFLDIFKGFITVFFPLWLQVHADGPISTFFTNGLIVGLFAILGHVYPVYLKFQGGKAVATSAGVVLGVNPILLLILAIIFFIVLKIFKYVSLASIVAAICCVIGSLIIQDYILLVVSFLVSIILIIRHRSNIARIFRGEEPKIKWM</sequence>
<accession>Q2FYS6</accession>
<comment type="function">
    <text evidence="1">Catalyzes the transfer of an acyl group from acyl-phosphate (acyl-PO(4)) to glycerol-3-phosphate (G3P) to form lysophosphatidic acid (LPA). This enzyme utilizes acyl-phosphate as fatty acyl donor, but not acyl-CoA or acyl-ACP.</text>
</comment>
<comment type="catalytic activity">
    <reaction evidence="1">
        <text>an acyl phosphate + sn-glycerol 3-phosphate = a 1-acyl-sn-glycero-3-phosphate + phosphate</text>
        <dbReference type="Rhea" id="RHEA:34075"/>
        <dbReference type="ChEBI" id="CHEBI:43474"/>
        <dbReference type="ChEBI" id="CHEBI:57597"/>
        <dbReference type="ChEBI" id="CHEBI:57970"/>
        <dbReference type="ChEBI" id="CHEBI:59918"/>
        <dbReference type="EC" id="2.3.1.275"/>
    </reaction>
</comment>
<comment type="pathway">
    <text evidence="1">Lipid metabolism; phospholipid metabolism.</text>
</comment>
<comment type="subunit">
    <text evidence="1">Probably interacts with PlsX.</text>
</comment>
<comment type="subcellular location">
    <subcellularLocation>
        <location evidence="1">Cell membrane</location>
        <topology evidence="1">Multi-pass membrane protein</topology>
    </subcellularLocation>
</comment>
<comment type="similarity">
    <text evidence="1">Belongs to the PlsY family.</text>
</comment>
<proteinExistence type="inferred from homology"/>
<protein>
    <recommendedName>
        <fullName evidence="1">Glycerol-3-phosphate acyltransferase</fullName>
    </recommendedName>
    <alternativeName>
        <fullName evidence="1">Acyl-PO4 G3P acyltransferase</fullName>
    </alternativeName>
    <alternativeName>
        <fullName evidence="1">Acyl-phosphate--glycerol-3-phosphate acyltransferase</fullName>
    </alternativeName>
    <alternativeName>
        <fullName evidence="1">G3P acyltransferase</fullName>
        <shortName evidence="1">GPAT</shortName>
        <ecNumber evidence="1">2.3.1.275</ecNumber>
    </alternativeName>
    <alternativeName>
        <fullName evidence="1">Lysophosphatidic acid synthase</fullName>
        <shortName evidence="1">LPA synthase</shortName>
    </alternativeName>
</protein>
<name>PLSY_STAA8</name>
<evidence type="ECO:0000255" key="1">
    <source>
        <dbReference type="HAMAP-Rule" id="MF_01043"/>
    </source>
</evidence>
<gene>
    <name evidence="1" type="primary">plsY</name>
    <name type="ordered locus">SAOUHSC_01350</name>
</gene>
<organism>
    <name type="scientific">Staphylococcus aureus (strain NCTC 8325 / PS 47)</name>
    <dbReference type="NCBI Taxonomy" id="93061"/>
    <lineage>
        <taxon>Bacteria</taxon>
        <taxon>Bacillati</taxon>
        <taxon>Bacillota</taxon>
        <taxon>Bacilli</taxon>
        <taxon>Bacillales</taxon>
        <taxon>Staphylococcaceae</taxon>
        <taxon>Staphylococcus</taxon>
    </lineage>
</organism>
<feature type="chain" id="PRO_0000250333" description="Glycerol-3-phosphate acyltransferase">
    <location>
        <begin position="1"/>
        <end position="202"/>
    </location>
</feature>
<feature type="transmembrane region" description="Helical" evidence="1">
    <location>
        <begin position="2"/>
        <end position="22"/>
    </location>
</feature>
<feature type="transmembrane region" description="Helical" evidence="1">
    <location>
        <begin position="54"/>
        <end position="74"/>
    </location>
</feature>
<feature type="transmembrane region" description="Helical" evidence="1">
    <location>
        <begin position="85"/>
        <end position="105"/>
    </location>
</feature>
<feature type="transmembrane region" description="Helical" evidence="1">
    <location>
        <begin position="120"/>
        <end position="140"/>
    </location>
</feature>
<feature type="transmembrane region" description="Helical" evidence="1">
    <location>
        <begin position="141"/>
        <end position="161"/>
    </location>
</feature>
<feature type="transmembrane region" description="Helical" evidence="1">
    <location>
        <begin position="162"/>
        <end position="182"/>
    </location>
</feature>
<dbReference type="EC" id="2.3.1.275" evidence="1"/>
<dbReference type="EMBL" id="CP000253">
    <property type="protein sequence ID" value="ABD30446.1"/>
    <property type="molecule type" value="Genomic_DNA"/>
</dbReference>
<dbReference type="RefSeq" id="WP_000972781.1">
    <property type="nucleotide sequence ID" value="NZ_LS483365.1"/>
</dbReference>
<dbReference type="RefSeq" id="YP_499878.1">
    <property type="nucleotide sequence ID" value="NC_007795.1"/>
</dbReference>
<dbReference type="SMR" id="Q2FYS6"/>
<dbReference type="STRING" id="93061.SAOUHSC_01350"/>
<dbReference type="PaxDb" id="1280-SAXN108_1369"/>
<dbReference type="GeneID" id="3920056"/>
<dbReference type="KEGG" id="sao:SAOUHSC_01350"/>
<dbReference type="PATRIC" id="fig|93061.5.peg.1236"/>
<dbReference type="eggNOG" id="COG0344">
    <property type="taxonomic scope" value="Bacteria"/>
</dbReference>
<dbReference type="HOGENOM" id="CLU_081254_4_0_9"/>
<dbReference type="OrthoDB" id="9777124at2"/>
<dbReference type="UniPathway" id="UPA00085"/>
<dbReference type="PRO" id="PR:Q2FYS6"/>
<dbReference type="Proteomes" id="UP000008816">
    <property type="component" value="Chromosome"/>
</dbReference>
<dbReference type="GO" id="GO:0005886">
    <property type="term" value="C:plasma membrane"/>
    <property type="evidence" value="ECO:0000318"/>
    <property type="project" value="GO_Central"/>
</dbReference>
<dbReference type="GO" id="GO:0043772">
    <property type="term" value="F:acyl-phosphate glycerol-3-phosphate acyltransferase activity"/>
    <property type="evidence" value="ECO:0007669"/>
    <property type="project" value="UniProtKB-UniRule"/>
</dbReference>
<dbReference type="GO" id="GO:0008654">
    <property type="term" value="P:phospholipid biosynthetic process"/>
    <property type="evidence" value="ECO:0007669"/>
    <property type="project" value="UniProtKB-UniRule"/>
</dbReference>
<dbReference type="HAMAP" id="MF_01043">
    <property type="entry name" value="PlsY"/>
    <property type="match status" value="1"/>
</dbReference>
<dbReference type="InterPro" id="IPR003811">
    <property type="entry name" value="G3P_acylTferase_PlsY"/>
</dbReference>
<dbReference type="NCBIfam" id="TIGR00023">
    <property type="entry name" value="glycerol-3-phosphate 1-O-acyltransferase PlsY"/>
    <property type="match status" value="1"/>
</dbReference>
<dbReference type="PANTHER" id="PTHR30309:SF0">
    <property type="entry name" value="GLYCEROL-3-PHOSPHATE ACYLTRANSFERASE-RELATED"/>
    <property type="match status" value="1"/>
</dbReference>
<dbReference type="PANTHER" id="PTHR30309">
    <property type="entry name" value="INNER MEMBRANE PROTEIN YGIH"/>
    <property type="match status" value="1"/>
</dbReference>
<dbReference type="Pfam" id="PF02660">
    <property type="entry name" value="G3P_acyltransf"/>
    <property type="match status" value="1"/>
</dbReference>
<dbReference type="SMART" id="SM01207">
    <property type="entry name" value="G3P_acyltransf"/>
    <property type="match status" value="1"/>
</dbReference>
<keyword id="KW-1003">Cell membrane</keyword>
<keyword id="KW-0444">Lipid biosynthesis</keyword>
<keyword id="KW-0443">Lipid metabolism</keyword>
<keyword id="KW-0472">Membrane</keyword>
<keyword id="KW-0594">Phospholipid biosynthesis</keyword>
<keyword id="KW-1208">Phospholipid metabolism</keyword>
<keyword id="KW-1185">Reference proteome</keyword>
<keyword id="KW-0808">Transferase</keyword>
<keyword id="KW-0812">Transmembrane</keyword>
<keyword id="KW-1133">Transmembrane helix</keyword>